<organism>
    <name type="scientific">Escherichia coli O6:H1 (strain CFT073 / ATCC 700928 / UPEC)</name>
    <dbReference type="NCBI Taxonomy" id="199310"/>
    <lineage>
        <taxon>Bacteria</taxon>
        <taxon>Pseudomonadati</taxon>
        <taxon>Pseudomonadota</taxon>
        <taxon>Gammaproteobacteria</taxon>
        <taxon>Enterobacterales</taxon>
        <taxon>Enterobacteriaceae</taxon>
        <taxon>Escherichia</taxon>
    </lineage>
</organism>
<name>CHEY_ECOL6</name>
<reference key="1">
    <citation type="journal article" date="2002" name="Proc. Natl. Acad. Sci. U.S.A.">
        <title>Extensive mosaic structure revealed by the complete genome sequence of uropathogenic Escherichia coli.</title>
        <authorList>
            <person name="Welch R.A."/>
            <person name="Burland V."/>
            <person name="Plunkett G. III"/>
            <person name="Redford P."/>
            <person name="Roesch P."/>
            <person name="Rasko D."/>
            <person name="Buckles E.L."/>
            <person name="Liou S.-R."/>
            <person name="Boutin A."/>
            <person name="Hackett J."/>
            <person name="Stroud D."/>
            <person name="Mayhew G.F."/>
            <person name="Rose D.J."/>
            <person name="Zhou S."/>
            <person name="Schwartz D.C."/>
            <person name="Perna N.T."/>
            <person name="Mobley H.L.T."/>
            <person name="Donnenberg M.S."/>
            <person name="Blattner F.R."/>
        </authorList>
    </citation>
    <scope>NUCLEOTIDE SEQUENCE [LARGE SCALE GENOMIC DNA]</scope>
    <source>
        <strain>CFT073 / ATCC 700928 / UPEC</strain>
    </source>
</reference>
<dbReference type="EMBL" id="AE014075">
    <property type="protein sequence ID" value="AAN80756.1"/>
    <property type="molecule type" value="Genomic_DNA"/>
</dbReference>
<dbReference type="RefSeq" id="WP_000763860.1">
    <property type="nucleotide sequence ID" value="NZ_CP051263.1"/>
</dbReference>
<dbReference type="BMRB" id="Q8FGP6"/>
<dbReference type="SMR" id="Q8FGP6"/>
<dbReference type="STRING" id="199310.c2297"/>
<dbReference type="KEGG" id="ecc:c2297"/>
<dbReference type="eggNOG" id="COG0745">
    <property type="taxonomic scope" value="Bacteria"/>
</dbReference>
<dbReference type="HOGENOM" id="CLU_000445_69_12_6"/>
<dbReference type="BioCyc" id="ECOL199310:C2297-MONOMER"/>
<dbReference type="Proteomes" id="UP000001410">
    <property type="component" value="Chromosome"/>
</dbReference>
<dbReference type="GO" id="GO:0005737">
    <property type="term" value="C:cytoplasm"/>
    <property type="evidence" value="ECO:0007669"/>
    <property type="project" value="UniProtKB-SubCell"/>
</dbReference>
<dbReference type="GO" id="GO:0046872">
    <property type="term" value="F:metal ion binding"/>
    <property type="evidence" value="ECO:0007669"/>
    <property type="project" value="UniProtKB-KW"/>
</dbReference>
<dbReference type="GO" id="GO:0097588">
    <property type="term" value="P:archaeal or bacterial-type flagellum-dependent cell motility"/>
    <property type="evidence" value="ECO:0007669"/>
    <property type="project" value="UniProtKB-KW"/>
</dbReference>
<dbReference type="GO" id="GO:0006935">
    <property type="term" value="P:chemotaxis"/>
    <property type="evidence" value="ECO:0007669"/>
    <property type="project" value="UniProtKB-KW"/>
</dbReference>
<dbReference type="GO" id="GO:0000160">
    <property type="term" value="P:phosphorelay signal transduction system"/>
    <property type="evidence" value="ECO:0007669"/>
    <property type="project" value="UniProtKB-KW"/>
</dbReference>
<dbReference type="CDD" id="cd19923">
    <property type="entry name" value="REC_CheY_CheY3"/>
    <property type="match status" value="1"/>
</dbReference>
<dbReference type="FunFam" id="3.40.50.2300:FF:000019">
    <property type="entry name" value="Chemotaxis response regulator CheY"/>
    <property type="match status" value="1"/>
</dbReference>
<dbReference type="Gene3D" id="3.40.50.2300">
    <property type="match status" value="1"/>
</dbReference>
<dbReference type="InterPro" id="IPR011006">
    <property type="entry name" value="CheY-like_superfamily"/>
</dbReference>
<dbReference type="InterPro" id="IPR001789">
    <property type="entry name" value="Sig_transdc_resp-reg_receiver"/>
</dbReference>
<dbReference type="InterPro" id="IPR052048">
    <property type="entry name" value="ST_Response_Regulator"/>
</dbReference>
<dbReference type="NCBIfam" id="NF007901">
    <property type="entry name" value="PRK10610.1"/>
    <property type="match status" value="1"/>
</dbReference>
<dbReference type="PANTHER" id="PTHR43228">
    <property type="entry name" value="TWO-COMPONENT RESPONSE REGULATOR"/>
    <property type="match status" value="1"/>
</dbReference>
<dbReference type="PANTHER" id="PTHR43228:SF1">
    <property type="entry name" value="TWO-COMPONENT RESPONSE REGULATOR ARR22"/>
    <property type="match status" value="1"/>
</dbReference>
<dbReference type="Pfam" id="PF00072">
    <property type="entry name" value="Response_reg"/>
    <property type="match status" value="1"/>
</dbReference>
<dbReference type="SMART" id="SM00448">
    <property type="entry name" value="REC"/>
    <property type="match status" value="1"/>
</dbReference>
<dbReference type="SUPFAM" id="SSF52172">
    <property type="entry name" value="CheY-like"/>
    <property type="match status" value="1"/>
</dbReference>
<dbReference type="PROSITE" id="PS50110">
    <property type="entry name" value="RESPONSE_REGULATORY"/>
    <property type="match status" value="1"/>
</dbReference>
<keyword id="KW-0007">Acetylation</keyword>
<keyword id="KW-0145">Chemotaxis</keyword>
<keyword id="KW-0963">Cytoplasm</keyword>
<keyword id="KW-0283">Flagellar rotation</keyword>
<keyword id="KW-0460">Magnesium</keyword>
<keyword id="KW-0479">Metal-binding</keyword>
<keyword id="KW-0597">Phosphoprotein</keyword>
<keyword id="KW-1185">Reference proteome</keyword>
<keyword id="KW-0902">Two-component regulatory system</keyword>
<feature type="initiator methionine" description="Removed" evidence="1">
    <location>
        <position position="1"/>
    </location>
</feature>
<feature type="chain" id="PRO_0000081042" description="Chemotaxis protein CheY">
    <location>
        <begin position="2"/>
        <end position="129"/>
    </location>
</feature>
<feature type="domain" description="Response regulatory" evidence="4">
    <location>
        <begin position="7"/>
        <end position="124"/>
    </location>
</feature>
<feature type="binding site" evidence="2">
    <location>
        <position position="12"/>
    </location>
    <ligand>
        <name>Mg(2+)</name>
        <dbReference type="ChEBI" id="CHEBI:18420"/>
    </ligand>
</feature>
<feature type="binding site" evidence="3">
    <location>
        <position position="13"/>
    </location>
    <ligand>
        <name>Mg(2+)</name>
        <dbReference type="ChEBI" id="CHEBI:18420"/>
    </ligand>
</feature>
<feature type="binding site" evidence="3">
    <location>
        <position position="57"/>
    </location>
    <ligand>
        <name>Mg(2+)</name>
        <dbReference type="ChEBI" id="CHEBI:18420"/>
    </ligand>
</feature>
<feature type="binding site" evidence="3">
    <location>
        <position position="59"/>
    </location>
    <ligand>
        <name>Mg(2+)</name>
        <dbReference type="ChEBI" id="CHEBI:18420"/>
    </ligand>
</feature>
<feature type="modified residue" description="4-aspartylphosphate" evidence="4">
    <location>
        <position position="57"/>
    </location>
</feature>
<feature type="modified residue" description="N6-acetyllysine" evidence="1">
    <location>
        <position position="92"/>
    </location>
</feature>
<feature type="modified residue" description="N6-acetyllysine" evidence="1">
    <location>
        <position position="109"/>
    </location>
</feature>
<protein>
    <recommendedName>
        <fullName>Chemotaxis protein CheY</fullName>
    </recommendedName>
</protein>
<gene>
    <name type="primary">cheY</name>
    <name type="ordered locus">c2297</name>
</gene>
<proteinExistence type="inferred from homology"/>
<accession>Q8FGP6</accession>
<comment type="function">
    <text evidence="3">Involved in the transmission of sensory signals from the chemoreceptors to the flagellar motors. In its active (phosphorylated or acetylated) form, CheY exhibits enhanced binding to a switch component, FliM, at the flagellar motor which induces a change from counterclockwise to clockwise flagellar rotation (By similarity).</text>
</comment>
<comment type="cofactor">
    <cofactor evidence="3">
        <name>Mg(2+)</name>
        <dbReference type="ChEBI" id="CHEBI:18420"/>
    </cofactor>
    <text evidence="3">Binds 1 Mg(2+) ion per subunit.</text>
</comment>
<comment type="subcellular location">
    <subcellularLocation>
        <location evidence="5">Cytoplasm</location>
    </subcellularLocation>
</comment>
<comment type="PTM">
    <text evidence="3">Phosphorylated by CheA or acetylated by acetyl-CoA synthetase, depending on which acetate metabolism pathway is available.</text>
</comment>
<sequence length="129" mass="14111">MADKELKFLVVDDFSTMRRIVRNLLKELGFNNVEEAEDGLDALNKLQAGGYGFVISDWNMPNMDGLELLKTIRADGAMSALPVLMVTAEAKKENIIAAAQAGASGYVVKPFTAATLEEKLNKIFEKLGM</sequence>
<evidence type="ECO:0000250" key="1"/>
<evidence type="ECO:0000250" key="2">
    <source>
        <dbReference type="UniProtKB" id="A0A0H3AMJ9"/>
    </source>
</evidence>
<evidence type="ECO:0000250" key="3">
    <source>
        <dbReference type="UniProtKB" id="P0AE67"/>
    </source>
</evidence>
<evidence type="ECO:0000255" key="4">
    <source>
        <dbReference type="PROSITE-ProRule" id="PRU00169"/>
    </source>
</evidence>
<evidence type="ECO:0000305" key="5"/>